<reference key="1">
    <citation type="journal article" date="2001" name="Proc. Natl. Acad. Sci. U.S.A.">
        <title>Analysis of the chromosome sequence of the legume symbiont Sinorhizobium meliloti strain 1021.</title>
        <authorList>
            <person name="Capela D."/>
            <person name="Barloy-Hubler F."/>
            <person name="Gouzy J."/>
            <person name="Bothe G."/>
            <person name="Ampe F."/>
            <person name="Batut J."/>
            <person name="Boistard P."/>
            <person name="Becker A."/>
            <person name="Boutry M."/>
            <person name="Cadieu E."/>
            <person name="Dreano S."/>
            <person name="Gloux S."/>
            <person name="Godrie T."/>
            <person name="Goffeau A."/>
            <person name="Kahn D."/>
            <person name="Kiss E."/>
            <person name="Lelaure V."/>
            <person name="Masuy D."/>
            <person name="Pohl T."/>
            <person name="Portetelle D."/>
            <person name="Puehler A."/>
            <person name="Purnelle B."/>
            <person name="Ramsperger U."/>
            <person name="Renard C."/>
            <person name="Thebault P."/>
            <person name="Vandenbol M."/>
            <person name="Weidner S."/>
            <person name="Galibert F."/>
        </authorList>
    </citation>
    <scope>NUCLEOTIDE SEQUENCE [LARGE SCALE GENOMIC DNA]</scope>
    <source>
        <strain>1021</strain>
    </source>
</reference>
<reference key="2">
    <citation type="journal article" date="2001" name="Science">
        <title>The composite genome of the legume symbiont Sinorhizobium meliloti.</title>
        <authorList>
            <person name="Galibert F."/>
            <person name="Finan T.M."/>
            <person name="Long S.R."/>
            <person name="Puehler A."/>
            <person name="Abola P."/>
            <person name="Ampe F."/>
            <person name="Barloy-Hubler F."/>
            <person name="Barnett M.J."/>
            <person name="Becker A."/>
            <person name="Boistard P."/>
            <person name="Bothe G."/>
            <person name="Boutry M."/>
            <person name="Bowser L."/>
            <person name="Buhrmester J."/>
            <person name="Cadieu E."/>
            <person name="Capela D."/>
            <person name="Chain P."/>
            <person name="Cowie A."/>
            <person name="Davis R.W."/>
            <person name="Dreano S."/>
            <person name="Federspiel N.A."/>
            <person name="Fisher R.F."/>
            <person name="Gloux S."/>
            <person name="Godrie T."/>
            <person name="Goffeau A."/>
            <person name="Golding B."/>
            <person name="Gouzy J."/>
            <person name="Gurjal M."/>
            <person name="Hernandez-Lucas I."/>
            <person name="Hong A."/>
            <person name="Huizar L."/>
            <person name="Hyman R.W."/>
            <person name="Jones T."/>
            <person name="Kahn D."/>
            <person name="Kahn M.L."/>
            <person name="Kalman S."/>
            <person name="Keating D.H."/>
            <person name="Kiss E."/>
            <person name="Komp C."/>
            <person name="Lelaure V."/>
            <person name="Masuy D."/>
            <person name="Palm C."/>
            <person name="Peck M.C."/>
            <person name="Pohl T.M."/>
            <person name="Portetelle D."/>
            <person name="Purnelle B."/>
            <person name="Ramsperger U."/>
            <person name="Surzycki R."/>
            <person name="Thebault P."/>
            <person name="Vandenbol M."/>
            <person name="Vorhoelter F.J."/>
            <person name="Weidner S."/>
            <person name="Wells D.H."/>
            <person name="Wong K."/>
            <person name="Yeh K.-C."/>
            <person name="Batut J."/>
        </authorList>
    </citation>
    <scope>NUCLEOTIDE SEQUENCE [LARGE SCALE GENOMIC DNA]</scope>
    <source>
        <strain>1021</strain>
    </source>
</reference>
<feature type="chain" id="PRO_0000223816" description="Acetyl-coenzyme A carboxylase carboxyl transferase subunit alpha">
    <location>
        <begin position="1"/>
        <end position="317"/>
    </location>
</feature>
<feature type="domain" description="CoA carboxyltransferase C-terminal" evidence="2">
    <location>
        <begin position="40"/>
        <end position="293"/>
    </location>
</feature>
<accession>Q92ME2</accession>
<sequence length="317" mass="34680">MHNYLDFEKPISDLEGKILELKKLASEDESVNTSDEIARLEGRVRDAMVEIYSKLSPWQKTQVARHPSRPHFLDYASRLFTEFTPLAGDRNFANDDAIQAGLARFHGTPVAVIGQEKGNDTKSRIKHNFGSPRPEGYRKATRIMEMADRFGLPLITLVDTAGAYPGVNAEERGQAEAIARSTEMCLNVKVPIVTVVIGEGGSGGAIAIATGNRVYMLEHAIYSVISPEGAASILWRDSTRAKEAASNMKITAEDLKSLGVIDGIIPEPVGGAHRDPDAVISRTETVIGDALKELSARNGDELRADRRQKYLNIGRNL</sequence>
<dbReference type="EC" id="2.1.3.15" evidence="1"/>
<dbReference type="EMBL" id="AL591688">
    <property type="protein sequence ID" value="CAC47261.1"/>
    <property type="molecule type" value="Genomic_DNA"/>
</dbReference>
<dbReference type="RefSeq" id="NP_386788.1">
    <property type="nucleotide sequence ID" value="NC_003047.1"/>
</dbReference>
<dbReference type="RefSeq" id="WP_003527479.1">
    <property type="nucleotide sequence ID" value="NC_003047.1"/>
</dbReference>
<dbReference type="SMR" id="Q92ME2"/>
<dbReference type="EnsemblBacteria" id="CAC47261">
    <property type="protein sequence ID" value="CAC47261"/>
    <property type="gene ID" value="SMc00690"/>
</dbReference>
<dbReference type="KEGG" id="sme:SMc00690"/>
<dbReference type="PATRIC" id="fig|266834.11.peg.4184"/>
<dbReference type="eggNOG" id="COG0825">
    <property type="taxonomic scope" value="Bacteria"/>
</dbReference>
<dbReference type="HOGENOM" id="CLU_015486_0_2_5"/>
<dbReference type="OrthoDB" id="9808023at2"/>
<dbReference type="UniPathway" id="UPA00655">
    <property type="reaction ID" value="UER00711"/>
</dbReference>
<dbReference type="Proteomes" id="UP000001976">
    <property type="component" value="Chromosome"/>
</dbReference>
<dbReference type="GO" id="GO:0009317">
    <property type="term" value="C:acetyl-CoA carboxylase complex"/>
    <property type="evidence" value="ECO:0007669"/>
    <property type="project" value="InterPro"/>
</dbReference>
<dbReference type="GO" id="GO:0003989">
    <property type="term" value="F:acetyl-CoA carboxylase activity"/>
    <property type="evidence" value="ECO:0007669"/>
    <property type="project" value="InterPro"/>
</dbReference>
<dbReference type="GO" id="GO:0005524">
    <property type="term" value="F:ATP binding"/>
    <property type="evidence" value="ECO:0007669"/>
    <property type="project" value="UniProtKB-KW"/>
</dbReference>
<dbReference type="GO" id="GO:0016743">
    <property type="term" value="F:carboxyl- or carbamoyltransferase activity"/>
    <property type="evidence" value="ECO:0007669"/>
    <property type="project" value="UniProtKB-UniRule"/>
</dbReference>
<dbReference type="GO" id="GO:0006633">
    <property type="term" value="P:fatty acid biosynthetic process"/>
    <property type="evidence" value="ECO:0007669"/>
    <property type="project" value="UniProtKB-KW"/>
</dbReference>
<dbReference type="GO" id="GO:2001295">
    <property type="term" value="P:malonyl-CoA biosynthetic process"/>
    <property type="evidence" value="ECO:0007669"/>
    <property type="project" value="UniProtKB-UniRule"/>
</dbReference>
<dbReference type="Gene3D" id="3.90.226.10">
    <property type="entry name" value="2-enoyl-CoA Hydratase, Chain A, domain 1"/>
    <property type="match status" value="1"/>
</dbReference>
<dbReference type="HAMAP" id="MF_00823">
    <property type="entry name" value="AcetylCoA_CT_alpha"/>
    <property type="match status" value="1"/>
</dbReference>
<dbReference type="InterPro" id="IPR001095">
    <property type="entry name" value="Acetyl_CoA_COase_a_su"/>
</dbReference>
<dbReference type="InterPro" id="IPR029045">
    <property type="entry name" value="ClpP/crotonase-like_dom_sf"/>
</dbReference>
<dbReference type="InterPro" id="IPR011763">
    <property type="entry name" value="COA_CT_C"/>
</dbReference>
<dbReference type="NCBIfam" id="TIGR00513">
    <property type="entry name" value="accA"/>
    <property type="match status" value="1"/>
</dbReference>
<dbReference type="NCBIfam" id="NF041504">
    <property type="entry name" value="AccA_sub"/>
    <property type="match status" value="1"/>
</dbReference>
<dbReference type="NCBIfam" id="NF004344">
    <property type="entry name" value="PRK05724.1"/>
    <property type="match status" value="1"/>
</dbReference>
<dbReference type="PANTHER" id="PTHR42853">
    <property type="entry name" value="ACETYL-COENZYME A CARBOXYLASE CARBOXYL TRANSFERASE SUBUNIT ALPHA"/>
    <property type="match status" value="1"/>
</dbReference>
<dbReference type="PANTHER" id="PTHR42853:SF3">
    <property type="entry name" value="ACETYL-COENZYME A CARBOXYLASE CARBOXYL TRANSFERASE SUBUNIT ALPHA, CHLOROPLASTIC"/>
    <property type="match status" value="1"/>
</dbReference>
<dbReference type="Pfam" id="PF03255">
    <property type="entry name" value="ACCA"/>
    <property type="match status" value="1"/>
</dbReference>
<dbReference type="PRINTS" id="PR01069">
    <property type="entry name" value="ACCCTRFRASEA"/>
</dbReference>
<dbReference type="SUPFAM" id="SSF52096">
    <property type="entry name" value="ClpP/crotonase"/>
    <property type="match status" value="1"/>
</dbReference>
<dbReference type="PROSITE" id="PS50989">
    <property type="entry name" value="COA_CT_CTER"/>
    <property type="match status" value="1"/>
</dbReference>
<gene>
    <name evidence="1" type="primary">accA</name>
    <name type="ordered locus">R02682</name>
    <name type="ORF">SMc00690</name>
</gene>
<organism>
    <name type="scientific">Rhizobium meliloti (strain 1021)</name>
    <name type="common">Ensifer meliloti</name>
    <name type="synonym">Sinorhizobium meliloti</name>
    <dbReference type="NCBI Taxonomy" id="266834"/>
    <lineage>
        <taxon>Bacteria</taxon>
        <taxon>Pseudomonadati</taxon>
        <taxon>Pseudomonadota</taxon>
        <taxon>Alphaproteobacteria</taxon>
        <taxon>Hyphomicrobiales</taxon>
        <taxon>Rhizobiaceae</taxon>
        <taxon>Sinorhizobium/Ensifer group</taxon>
        <taxon>Sinorhizobium</taxon>
    </lineage>
</organism>
<name>ACCA_RHIME</name>
<keyword id="KW-0067">ATP-binding</keyword>
<keyword id="KW-0963">Cytoplasm</keyword>
<keyword id="KW-0275">Fatty acid biosynthesis</keyword>
<keyword id="KW-0276">Fatty acid metabolism</keyword>
<keyword id="KW-0444">Lipid biosynthesis</keyword>
<keyword id="KW-0443">Lipid metabolism</keyword>
<keyword id="KW-0547">Nucleotide-binding</keyword>
<keyword id="KW-1185">Reference proteome</keyword>
<keyword id="KW-0808">Transferase</keyword>
<evidence type="ECO:0000255" key="1">
    <source>
        <dbReference type="HAMAP-Rule" id="MF_00823"/>
    </source>
</evidence>
<evidence type="ECO:0000255" key="2">
    <source>
        <dbReference type="PROSITE-ProRule" id="PRU01137"/>
    </source>
</evidence>
<protein>
    <recommendedName>
        <fullName evidence="1">Acetyl-coenzyme A carboxylase carboxyl transferase subunit alpha</fullName>
        <shortName evidence="1">ACCase subunit alpha</shortName>
        <shortName evidence="1">Acetyl-CoA carboxylase carboxyltransferase subunit alpha</shortName>
        <ecNumber evidence="1">2.1.3.15</ecNumber>
    </recommendedName>
</protein>
<proteinExistence type="inferred from homology"/>
<comment type="function">
    <text evidence="1">Component of the acetyl coenzyme A carboxylase (ACC) complex. First, biotin carboxylase catalyzes the carboxylation of biotin on its carrier protein (BCCP) and then the CO(2) group is transferred by the carboxyltransferase to acetyl-CoA to form malonyl-CoA.</text>
</comment>
<comment type="catalytic activity">
    <reaction evidence="1">
        <text>N(6)-carboxybiotinyl-L-lysyl-[protein] + acetyl-CoA = N(6)-biotinyl-L-lysyl-[protein] + malonyl-CoA</text>
        <dbReference type="Rhea" id="RHEA:54728"/>
        <dbReference type="Rhea" id="RHEA-COMP:10505"/>
        <dbReference type="Rhea" id="RHEA-COMP:10506"/>
        <dbReference type="ChEBI" id="CHEBI:57288"/>
        <dbReference type="ChEBI" id="CHEBI:57384"/>
        <dbReference type="ChEBI" id="CHEBI:83144"/>
        <dbReference type="ChEBI" id="CHEBI:83145"/>
        <dbReference type="EC" id="2.1.3.15"/>
    </reaction>
</comment>
<comment type="pathway">
    <text evidence="1">Lipid metabolism; malonyl-CoA biosynthesis; malonyl-CoA from acetyl-CoA: step 1/1.</text>
</comment>
<comment type="subunit">
    <text evidence="1">Acetyl-CoA carboxylase is a heterohexamer composed of biotin carboxyl carrier protein (AccB), biotin carboxylase (AccC) and two subunits each of ACCase subunit alpha (AccA) and ACCase subunit beta (AccD).</text>
</comment>
<comment type="subcellular location">
    <subcellularLocation>
        <location evidence="1">Cytoplasm</location>
    </subcellularLocation>
</comment>
<comment type="similarity">
    <text evidence="1">Belongs to the AccA family.</text>
</comment>